<reference key="1">
    <citation type="journal article" date="2010" name="J. Bacteriol.">
        <title>Whole genome sequences of two Xylella fastidiosa strains (M12 and M23) causing almond leaf scorch disease in California.</title>
        <authorList>
            <person name="Chen J."/>
            <person name="Xie G."/>
            <person name="Han S."/>
            <person name="Chertkov O."/>
            <person name="Sims D."/>
            <person name="Civerolo E.L."/>
        </authorList>
    </citation>
    <scope>NUCLEOTIDE SEQUENCE [LARGE SCALE GENOMIC DNA]</scope>
    <source>
        <strain>M12</strain>
    </source>
</reference>
<gene>
    <name evidence="1" type="primary">hisA</name>
    <name type="ordered locus">Xfasm12_1415</name>
</gene>
<dbReference type="EC" id="5.3.1.16" evidence="1"/>
<dbReference type="EMBL" id="CP000941">
    <property type="protein sequence ID" value="ACA12338.1"/>
    <property type="molecule type" value="Genomic_DNA"/>
</dbReference>
<dbReference type="RefSeq" id="WP_004083405.1">
    <property type="nucleotide sequence ID" value="NC_010513.1"/>
</dbReference>
<dbReference type="SMR" id="B0U3A9"/>
<dbReference type="KEGG" id="xfm:Xfasm12_1415"/>
<dbReference type="HOGENOM" id="CLU_048577_1_2_6"/>
<dbReference type="UniPathway" id="UPA00031">
    <property type="reaction ID" value="UER00009"/>
</dbReference>
<dbReference type="GO" id="GO:0005737">
    <property type="term" value="C:cytoplasm"/>
    <property type="evidence" value="ECO:0007669"/>
    <property type="project" value="UniProtKB-SubCell"/>
</dbReference>
<dbReference type="GO" id="GO:0003949">
    <property type="term" value="F:1-(5-phosphoribosyl)-5-[(5-phosphoribosylamino)methylideneamino]imidazole-4-carboxamide isomerase activity"/>
    <property type="evidence" value="ECO:0007669"/>
    <property type="project" value="UniProtKB-UniRule"/>
</dbReference>
<dbReference type="GO" id="GO:0000105">
    <property type="term" value="P:L-histidine biosynthetic process"/>
    <property type="evidence" value="ECO:0007669"/>
    <property type="project" value="UniProtKB-UniRule"/>
</dbReference>
<dbReference type="GO" id="GO:0000162">
    <property type="term" value="P:L-tryptophan biosynthetic process"/>
    <property type="evidence" value="ECO:0007669"/>
    <property type="project" value="TreeGrafter"/>
</dbReference>
<dbReference type="CDD" id="cd04732">
    <property type="entry name" value="HisA"/>
    <property type="match status" value="1"/>
</dbReference>
<dbReference type="FunFam" id="3.20.20.70:FF:000009">
    <property type="entry name" value="1-(5-phosphoribosyl)-5-[(5-phosphoribosylamino)methylideneamino] imidazole-4-carboxamide isomerase"/>
    <property type="match status" value="1"/>
</dbReference>
<dbReference type="Gene3D" id="3.20.20.70">
    <property type="entry name" value="Aldolase class I"/>
    <property type="match status" value="1"/>
</dbReference>
<dbReference type="HAMAP" id="MF_01014">
    <property type="entry name" value="HisA"/>
    <property type="match status" value="1"/>
</dbReference>
<dbReference type="InterPro" id="IPR013785">
    <property type="entry name" value="Aldolase_TIM"/>
</dbReference>
<dbReference type="InterPro" id="IPR006062">
    <property type="entry name" value="His_biosynth"/>
</dbReference>
<dbReference type="InterPro" id="IPR006063">
    <property type="entry name" value="HisA_bact_arch"/>
</dbReference>
<dbReference type="InterPro" id="IPR044524">
    <property type="entry name" value="Isoase_HisA-like"/>
</dbReference>
<dbReference type="InterPro" id="IPR023016">
    <property type="entry name" value="Isoase_HisA-like_bact"/>
</dbReference>
<dbReference type="InterPro" id="IPR011060">
    <property type="entry name" value="RibuloseP-bd_barrel"/>
</dbReference>
<dbReference type="NCBIfam" id="TIGR00007">
    <property type="entry name" value="1-(5-phosphoribosyl)-5-[(5-phosphoribosylamino)methylideneamino]imidazole-4-carboxamide isomerase"/>
    <property type="match status" value="1"/>
</dbReference>
<dbReference type="PANTHER" id="PTHR43090">
    <property type="entry name" value="1-(5-PHOSPHORIBOSYL)-5-[(5-PHOSPHORIBOSYLAMINO)METHYLIDENEAMINO] IMIDAZOLE-4-CARBOXAMIDE ISOMERASE"/>
    <property type="match status" value="1"/>
</dbReference>
<dbReference type="PANTHER" id="PTHR43090:SF2">
    <property type="entry name" value="1-(5-PHOSPHORIBOSYL)-5-[(5-PHOSPHORIBOSYLAMINO)METHYLIDENEAMINO] IMIDAZOLE-4-CARBOXAMIDE ISOMERASE"/>
    <property type="match status" value="1"/>
</dbReference>
<dbReference type="Pfam" id="PF00977">
    <property type="entry name" value="His_biosynth"/>
    <property type="match status" value="1"/>
</dbReference>
<dbReference type="SUPFAM" id="SSF51366">
    <property type="entry name" value="Ribulose-phoshate binding barrel"/>
    <property type="match status" value="1"/>
</dbReference>
<accession>B0U3A9</accession>
<keyword id="KW-0028">Amino-acid biosynthesis</keyword>
<keyword id="KW-0963">Cytoplasm</keyword>
<keyword id="KW-0368">Histidine biosynthesis</keyword>
<keyword id="KW-0413">Isomerase</keyword>
<sequence>MNFIVYPALDIRNGAVVRLQQGDYARQTRYDDQVLPRAQAFADSGATWMHLVDLDAAKAGGYTLAPLLRQITRATGLQVQTGGGVRSRDDVVRILDAGAARVVIGSLAVRQMACVIEWLQAFGPERITVALDTRQDAGGVWRLPVHGWTEVAEATLDVLAQQYAAAGLRHLLCTDIARDGMLSGPNMDVYTYLRALVPAVQLQVSGGARDVADVVAAKMAGCAGIVLGKALLEGRLALKEAVQHGSVADPGDPLPCGELTEPVCRYRSV</sequence>
<organism>
    <name type="scientific">Xylella fastidiosa (strain M12)</name>
    <dbReference type="NCBI Taxonomy" id="405440"/>
    <lineage>
        <taxon>Bacteria</taxon>
        <taxon>Pseudomonadati</taxon>
        <taxon>Pseudomonadota</taxon>
        <taxon>Gammaproteobacteria</taxon>
        <taxon>Lysobacterales</taxon>
        <taxon>Lysobacteraceae</taxon>
        <taxon>Xylella</taxon>
    </lineage>
</organism>
<feature type="chain" id="PRO_1000190572" description="1-(5-phosphoribosyl)-5-[(5-phosphoribosylamino)methylideneamino] imidazole-4-carboxamide isomerase">
    <location>
        <begin position="1"/>
        <end position="269"/>
    </location>
</feature>
<feature type="active site" description="Proton acceptor" evidence="1">
    <location>
        <position position="10"/>
    </location>
</feature>
<feature type="active site" description="Proton donor" evidence="1">
    <location>
        <position position="132"/>
    </location>
</feature>
<evidence type="ECO:0000255" key="1">
    <source>
        <dbReference type="HAMAP-Rule" id="MF_01014"/>
    </source>
</evidence>
<comment type="catalytic activity">
    <reaction evidence="1">
        <text>1-(5-phospho-beta-D-ribosyl)-5-[(5-phospho-beta-D-ribosylamino)methylideneamino]imidazole-4-carboxamide = 5-[(5-phospho-1-deoxy-D-ribulos-1-ylimino)methylamino]-1-(5-phospho-beta-D-ribosyl)imidazole-4-carboxamide</text>
        <dbReference type="Rhea" id="RHEA:15469"/>
        <dbReference type="ChEBI" id="CHEBI:58435"/>
        <dbReference type="ChEBI" id="CHEBI:58525"/>
        <dbReference type="EC" id="5.3.1.16"/>
    </reaction>
</comment>
<comment type="pathway">
    <text evidence="1">Amino-acid biosynthesis; L-histidine biosynthesis; L-histidine from 5-phospho-alpha-D-ribose 1-diphosphate: step 4/9.</text>
</comment>
<comment type="subcellular location">
    <subcellularLocation>
        <location evidence="1">Cytoplasm</location>
    </subcellularLocation>
</comment>
<comment type="similarity">
    <text evidence="1">Belongs to the HisA/HisF family.</text>
</comment>
<name>HIS4_XYLFM</name>
<proteinExistence type="inferred from homology"/>
<protein>
    <recommendedName>
        <fullName evidence="1">1-(5-phosphoribosyl)-5-[(5-phosphoribosylamino)methylideneamino] imidazole-4-carboxamide isomerase</fullName>
        <ecNumber evidence="1">5.3.1.16</ecNumber>
    </recommendedName>
    <alternativeName>
        <fullName evidence="1">Phosphoribosylformimino-5-aminoimidazole carboxamide ribotide isomerase</fullName>
    </alternativeName>
</protein>